<keyword id="KW-0066">ATP synthesis</keyword>
<keyword id="KW-0138">CF(0)</keyword>
<keyword id="KW-0375">Hydrogen ion transport</keyword>
<keyword id="KW-0406">Ion transport</keyword>
<keyword id="KW-0472">Membrane</keyword>
<keyword id="KW-0614">Plasmid</keyword>
<keyword id="KW-1185">Reference proteome</keyword>
<keyword id="KW-0793">Thylakoid</keyword>
<keyword id="KW-0812">Transmembrane</keyword>
<keyword id="KW-1133">Transmembrane helix</keyword>
<keyword id="KW-0813">Transport</keyword>
<evidence type="ECO:0000255" key="1">
    <source>
        <dbReference type="HAMAP-Rule" id="MF_01398"/>
    </source>
</evidence>
<evidence type="ECO:0000305" key="2"/>
<protein>
    <recommendedName>
        <fullName evidence="1">ATP synthase subunit b 2</fullName>
    </recommendedName>
    <alternativeName>
        <fullName evidence="1">ATP synthase F(0) sector subunit b 2</fullName>
    </alternativeName>
    <alternativeName>
        <fullName evidence="1">ATPase subunit I 2</fullName>
    </alternativeName>
    <alternativeName>
        <fullName evidence="1">F-type ATPase subunit b 2</fullName>
        <shortName evidence="1">F-ATPase subunit b 2</shortName>
    </alternativeName>
</protein>
<organism>
    <name type="scientific">Acaryochloris marina (strain MBIC 11017)</name>
    <dbReference type="NCBI Taxonomy" id="329726"/>
    <lineage>
        <taxon>Bacteria</taxon>
        <taxon>Bacillati</taxon>
        <taxon>Cyanobacteriota</taxon>
        <taxon>Cyanophyceae</taxon>
        <taxon>Acaryochloridales</taxon>
        <taxon>Acaryochloridaceae</taxon>
        <taxon>Acaryochloris</taxon>
    </lineage>
</organism>
<feature type="chain" id="PRO_0000368280" description="ATP synthase subunit b 2">
    <location>
        <begin position="1"/>
        <end position="263"/>
    </location>
</feature>
<feature type="transmembrane region" description="Helical" evidence="1">
    <location>
        <begin position="2"/>
        <end position="22"/>
    </location>
</feature>
<comment type="function">
    <text evidence="1">F(1)F(0) ATP synthase produces ATP from ADP in the presence of a proton or sodium gradient. F-type ATPases consist of two structural domains, F(1) containing the extramembraneous catalytic core and F(0) containing the membrane proton channel, linked together by a central stalk and a peripheral stalk. During catalysis, ATP synthesis in the catalytic domain of F(1) is coupled via a rotary mechanism of the central stalk subunits to proton translocation.</text>
</comment>
<comment type="function">
    <text evidence="1">Component of the F(0) channel, it forms part of the peripheral stalk, linking F(1) to F(0).</text>
</comment>
<comment type="subunit">
    <text evidence="1">F-type ATPases have 2 components, F(1) - the catalytic core - and F(0) - the membrane proton channel. F(1) has five subunits: alpha(3), beta(3), gamma(1), delta(1), epsilon(1). F(0) has four main subunits: a(1), b(1), b'(1) and c(10-14). The alpha and beta chains form an alternating ring which encloses part of the gamma chain. F(1) is attached to F(0) by a central stalk formed by the gamma and epsilon chains, while a peripheral stalk is formed by the delta, b and b' chains.</text>
</comment>
<comment type="subcellular location">
    <subcellularLocation>
        <location evidence="1">Cellular thylakoid membrane</location>
        <topology evidence="1">Single-pass membrane protein</topology>
    </subcellularLocation>
</comment>
<comment type="similarity">
    <text evidence="1">Belongs to the ATPase B chain family.</text>
</comment>
<dbReference type="EMBL" id="CP000841">
    <property type="protein sequence ID" value="ABW32659.1"/>
    <property type="molecule type" value="Genomic_DNA"/>
</dbReference>
<dbReference type="RefSeq" id="WP_012167717.1">
    <property type="nucleotide sequence ID" value="NC_009929.1"/>
</dbReference>
<dbReference type="SMR" id="A8ZNS3"/>
<dbReference type="KEGG" id="amr:AM1_D0164"/>
<dbReference type="HOGENOM" id="CLU_070737_0_0_3"/>
<dbReference type="OrthoDB" id="466272at2"/>
<dbReference type="Proteomes" id="UP000000268">
    <property type="component" value="Plasmid pREB4"/>
</dbReference>
<dbReference type="GO" id="GO:0031676">
    <property type="term" value="C:plasma membrane-derived thylakoid membrane"/>
    <property type="evidence" value="ECO:0007669"/>
    <property type="project" value="UniProtKB-SubCell"/>
</dbReference>
<dbReference type="GO" id="GO:0045259">
    <property type="term" value="C:proton-transporting ATP synthase complex"/>
    <property type="evidence" value="ECO:0007669"/>
    <property type="project" value="UniProtKB-KW"/>
</dbReference>
<dbReference type="GO" id="GO:0046933">
    <property type="term" value="F:proton-transporting ATP synthase activity, rotational mechanism"/>
    <property type="evidence" value="ECO:0007669"/>
    <property type="project" value="UniProtKB-UniRule"/>
</dbReference>
<dbReference type="GO" id="GO:0046961">
    <property type="term" value="F:proton-transporting ATPase activity, rotational mechanism"/>
    <property type="evidence" value="ECO:0007669"/>
    <property type="project" value="TreeGrafter"/>
</dbReference>
<dbReference type="CDD" id="cd06503">
    <property type="entry name" value="ATP-synt_Fo_b"/>
    <property type="match status" value="1"/>
</dbReference>
<dbReference type="HAMAP" id="MF_01398">
    <property type="entry name" value="ATP_synth_b_bprime"/>
    <property type="match status" value="1"/>
</dbReference>
<dbReference type="InterPro" id="IPR017707">
    <property type="entry name" value="Alt_ATP_synth_F0_bsu"/>
</dbReference>
<dbReference type="InterPro" id="IPR002146">
    <property type="entry name" value="ATP_synth_b/b'su_bac/chlpt"/>
</dbReference>
<dbReference type="InterPro" id="IPR050059">
    <property type="entry name" value="ATP_synthase_B_chain"/>
</dbReference>
<dbReference type="NCBIfam" id="TIGR03321">
    <property type="entry name" value="alt_F1F0_F0_B"/>
    <property type="match status" value="1"/>
</dbReference>
<dbReference type="NCBIfam" id="NF011044">
    <property type="entry name" value="PRK14474.1"/>
    <property type="match status" value="1"/>
</dbReference>
<dbReference type="PANTHER" id="PTHR33445">
    <property type="entry name" value="ATP SYNTHASE SUBUNIT B', CHLOROPLASTIC"/>
    <property type="match status" value="1"/>
</dbReference>
<dbReference type="PANTHER" id="PTHR33445:SF2">
    <property type="entry name" value="ATP SYNTHASE SUBUNIT B', CHLOROPLASTIC"/>
    <property type="match status" value="1"/>
</dbReference>
<dbReference type="Pfam" id="PF00430">
    <property type="entry name" value="ATP-synt_B"/>
    <property type="match status" value="1"/>
</dbReference>
<name>ATPF3_ACAM1</name>
<sequence length="263" mass="30353">MLIDPLTVVAQIINFLILVALLRRFLYTPITQVMKKRERLIAQQLQDAAHQQEVAQQEAERWRQMQQSLEHRQASFLTQAQDAADEHRHQLLQQIRDEVDSTQAQWREAVKREQHVFLSALQQRAGQQLAATLRCILQDLASANLEQQILETFITRLSHLPFSEQGVLETSLSNARGEELVISSTFPMPEDRKAQILAVLHQYAPAMESSVYQFVTIPDLICGIELKIPGYKLAWTIEQYLEQLEVKLNQVWDGMEKSWVEQG</sequence>
<gene>
    <name evidence="1 2" type="primary">atpF3</name>
    <name type="ordered locus">AM1_D0164</name>
</gene>
<reference key="1">
    <citation type="journal article" date="2008" name="Proc. Natl. Acad. Sci. U.S.A.">
        <title>Niche adaptation and genome expansion in the chlorophyll d-producing cyanobacterium Acaryochloris marina.</title>
        <authorList>
            <person name="Swingley W.D."/>
            <person name="Chen M."/>
            <person name="Cheung P.C."/>
            <person name="Conrad A.L."/>
            <person name="Dejesa L.C."/>
            <person name="Hao J."/>
            <person name="Honchak B.M."/>
            <person name="Karbach L.E."/>
            <person name="Kurdoglu A."/>
            <person name="Lahiri S."/>
            <person name="Mastrian S.D."/>
            <person name="Miyashita H."/>
            <person name="Page L."/>
            <person name="Ramakrishna P."/>
            <person name="Satoh S."/>
            <person name="Sattley W.M."/>
            <person name="Shimada Y."/>
            <person name="Taylor H.L."/>
            <person name="Tomo T."/>
            <person name="Tsuchiya T."/>
            <person name="Wang Z.T."/>
            <person name="Raymond J."/>
            <person name="Mimuro M."/>
            <person name="Blankenship R.E."/>
            <person name="Touchman J.W."/>
        </authorList>
    </citation>
    <scope>NUCLEOTIDE SEQUENCE [LARGE SCALE GENOMIC DNA]</scope>
    <source>
        <strain>MBIC 11017</strain>
    </source>
</reference>
<proteinExistence type="inferred from homology"/>
<geneLocation type="plasmid">
    <name>pREB4</name>
</geneLocation>
<accession>A8ZNS3</accession>